<name>CED12_CAEEL</name>
<protein>
    <recommendedName>
        <fullName evidence="14">Cell death abnormality protein 12</fullName>
    </recommendedName>
</protein>
<evidence type="ECO:0000255" key="1"/>
<evidence type="ECO:0000255" key="2">
    <source>
        <dbReference type="PROSITE-ProRule" id="PRU00664"/>
    </source>
</evidence>
<evidence type="ECO:0000269" key="3">
    <source>
    </source>
</evidence>
<evidence type="ECO:0000269" key="4">
    <source>
    </source>
</evidence>
<evidence type="ECO:0000269" key="5">
    <source>
    </source>
</evidence>
<evidence type="ECO:0000269" key="6">
    <source>
    </source>
</evidence>
<evidence type="ECO:0000269" key="7">
    <source>
    </source>
</evidence>
<evidence type="ECO:0000269" key="8">
    <source>
    </source>
</evidence>
<evidence type="ECO:0000269" key="9">
    <source>
    </source>
</evidence>
<evidence type="ECO:0000269" key="10">
    <source>
    </source>
</evidence>
<evidence type="ECO:0000269" key="11">
    <source>
    </source>
</evidence>
<evidence type="ECO:0000269" key="12">
    <source>
    </source>
</evidence>
<evidence type="ECO:0000269" key="13">
    <source>
    </source>
</evidence>
<evidence type="ECO:0000303" key="14">
    <source>
    </source>
</evidence>
<evidence type="ECO:0000305" key="15"/>
<evidence type="ECO:0000312" key="16">
    <source>
        <dbReference type="EMBL" id="AAL38510.1"/>
    </source>
</evidence>
<evidence type="ECO:0000312" key="17">
    <source>
        <dbReference type="EMBL" id="AAL49495.1"/>
    </source>
</evidence>
<evidence type="ECO:0000312" key="18">
    <source>
        <dbReference type="EMBL" id="CAD12890.1"/>
    </source>
</evidence>
<comment type="function">
    <text evidence="3 4 5 6 7 8 9 10 11 12 13">Involved in programmed apoptosis and necrosis. Required for the cell corpse engulfment process. Has roles in the formation of actin halos and distal tip cell migration (PubMed:11146658, PubMed:11595183, PubMed:11703939, PubMed:11703940, PubMed:14645848, PubMed:15247908, PubMed:15620647, PubMed:15744306, PubMed:21490059). Negatively regulates the unc-6/Netrin receptor unc-5 to control distal tip cell migration along the anterior-posterior axis of the body (PubMed:26292279). Plays no role in amphid axon outgrowth (PubMed:12297102).</text>
</comment>
<comment type="subunit">
    <text evidence="8">Interacts with psr-1. Forms a ternary complex with ced-2 and ced-5.</text>
</comment>
<comment type="interaction">
    <interactant intactId="EBI-6390460">
        <id>Q8STE5</id>
    </interactant>
    <interactant intactId="EBI-6390483">
        <id>G5EEN3</id>
        <label>ced-5</label>
    </interactant>
    <organismsDiffer>false</organismsDiffer>
    <experiments>4</experiments>
</comment>
<comment type="subcellular location">
    <subcellularLocation>
        <location evidence="5">Cytoplasm</location>
    </subcellularLocation>
    <text evidence="5">Punctate localization.</text>
</comment>
<comment type="developmental stage">
    <text evidence="5">Expressed in developing embryos.</text>
</comment>
<comment type="domain">
    <text evidence="5 9 12">The PH domain binds phosphatidylinositol 3,5-biphosphate, phosphatidylinositol 4-phosphate and phosphatidylinositol 3,4,5-trisphosphate in vitro (PubMed:21490059). Required for punctate localization in the cytoplasm and cell corpse engulfment (PubMed:11703939). Required for distal cell tip migration (PubMed:15247908).</text>
</comment>
<comment type="disruption phenotype">
    <text evidence="3 5 6 9 10 11 13">Deformity in the gonadal arm (PubMed:11703940). Defective distal tip cell migration (PubMed:11703939, PubMed:11703940, PubMed:15247908, PubMed:26292279). Defective cell corpse engulfment with an increased number of cell corpses (PubMed:11146658, PubMed:11703939, PubMed:11703940, PubMed:15620647). Absent actin 'halos' around early apoptotic corpses, which is likely indicative of defective actin reorganization around the apoptotic cell (PubMed:15744306). Double knockout in an unc-5 or unc-40 mutant background suppresses the distal tip cell migratory defect in the respective single mutants (PubMed:26292279).</text>
</comment>
<sequence>MAFHMPLKELQPVDTSLPEHVVKGAVVIDKEFTIWNHRAVIPSNALHTVFITINLLEQKLTDVVKMAARSMNLSEDDSYGLMADKPKRFITDDNLNSLGSGFILTLCASPDHYVKRITEILTEGNNISQMENAVKTLDEFSLDPALIEAFYRCSSLELLFSLIRDDRVCMSSTLLSTCLRALSSMLELAVGDFTWKSVPNDVVVSMASLVTGKAKREEANTLLAALQMLEQLVIGDDTTRDWILEEVPIETLIRHVEKSDERIALCALSLMNSMIRRCPDDEKRFELIKSLEVVPFRNAVHSSLLRGGGGVRNLNAIEQLVEVQRSLISAYETSPPTDAEVQKILDIESSEDVSEEIREMWKSQIGEHRCGRLAAISMVQFAEKSPQDLRMLISENTMRIEGGKWQLIPMWMRCCDIAAELFRVIPGRDELDRLIVVLFSTETPFPAVFACIVHLFHRTWREMQAKGGEMEKVACVVLEQLRHVLKRREIQDVEELSADLETFSYRAMQEIWREEQLGKENIQLHSEAVIQLKSKLRPKMEELVRINHLNYLKLGAVFRKPQKSKSLAKLAFWHWKLDASEKMLTITGCDGENYVEGVQRDDIRQVWIKDIADVTNNDEIDRKASSSRFTSSPSTQMLRGIRVQLKTTNDMKEGEVLMALTSDETQSVIWLEGLAELIGSKAVKSETDAMVERMLKMELRVRLLNVKLTNPEEKPEIPPIPDDIKSFISKF</sequence>
<organism>
    <name type="scientific">Caenorhabditis elegans</name>
    <dbReference type="NCBI Taxonomy" id="6239"/>
    <lineage>
        <taxon>Eukaryota</taxon>
        <taxon>Metazoa</taxon>
        <taxon>Ecdysozoa</taxon>
        <taxon>Nematoda</taxon>
        <taxon>Chromadorea</taxon>
        <taxon>Rhabditida</taxon>
        <taxon>Rhabditina</taxon>
        <taxon>Rhabditomorpha</taxon>
        <taxon>Rhabditoidea</taxon>
        <taxon>Rhabditidae</taxon>
        <taxon>Peloderinae</taxon>
        <taxon>Caenorhabditis</taxon>
    </lineage>
</organism>
<keyword id="KW-0053">Apoptosis</keyword>
<keyword id="KW-0963">Cytoplasm</keyword>
<keyword id="KW-0446">Lipid-binding</keyword>
<keyword id="KW-0581">Phagocytosis</keyword>
<keyword id="KW-1185">Reference proteome</keyword>
<keyword id="KW-0729">SH3-binding</keyword>
<reference evidence="15 16" key="1">
    <citation type="journal article" date="2001" name="Dev. Cell">
        <title>The C. elegans PH domain protein CED-12 regulates cytoskeletal reorganization via a Rho/Rac GTPase signaling pathway.</title>
        <authorList>
            <person name="Zhou Z."/>
            <person name="Caron E."/>
            <person name="Hartwieg E."/>
            <person name="Hall A."/>
            <person name="Horvitz H.R."/>
        </authorList>
    </citation>
    <scope>NUCLEOTIDE SEQUENCE [MRNA]</scope>
    <scope>FUNCTION</scope>
    <scope>SUBCELLULAR LOCATION</scope>
    <scope>DEVELOPMENTAL STAGE</scope>
    <scope>DOMAIN</scope>
    <scope>DISRUPTION PHENOTYPE</scope>
</reference>
<reference evidence="15 17" key="2">
    <citation type="journal article" date="2001" name="Dev. Cell">
        <title>C. elegans CED-12 acts in the conserved crkII/DOCK180/Rac pathway to control cell migration and cell corpse engulfment.</title>
        <authorList>
            <person name="Wu Y.-C."/>
            <person name="Tsai M.-C."/>
            <person name="Cheng L.-C."/>
            <person name="Chou C.-J."/>
            <person name="Weng N.-Y."/>
        </authorList>
    </citation>
    <scope>NUCLEOTIDE SEQUENCE [MRNA]</scope>
    <scope>FUNCTION</scope>
    <scope>TERNARY COMPLEX WITH CED-2 AND CED-5</scope>
    <scope>DISRUPTION PHENOTYPE</scope>
</reference>
<reference evidence="18" key="3">
    <citation type="journal article" date="1998" name="Science">
        <title>Genome sequence of the nematode C. elegans: a platform for investigating biology.</title>
        <authorList>
            <consortium name="The C. elegans sequencing consortium"/>
        </authorList>
    </citation>
    <scope>NUCLEOTIDE SEQUENCE [LARGE SCALE GENOMIC DNA]</scope>
    <source>
        <strain>Bristol N2</strain>
    </source>
</reference>
<reference evidence="15" key="4">
    <citation type="journal article" date="2000" name="Nat. Cell Biol.">
        <title>A common set of engulfment genes mediates removal of both apoptotic and necrotic cell corpses in C. elegans.</title>
        <authorList>
            <person name="Chung S."/>
            <person name="Gumienny T.L."/>
            <person name="Hengartner M.O."/>
            <person name="Driscoll M."/>
        </authorList>
    </citation>
    <scope>FUNCTION</scope>
    <scope>DOMAIN</scope>
    <scope>DISRUPTION PHENOTYPE</scope>
</reference>
<reference evidence="15" key="5">
    <citation type="journal article" date="2001" name="Cell">
        <title>CED-12/ELMO, a novel member of the CrkII/Dock180/Rac pathway, is required for phagocytosis and cell migration.</title>
        <authorList>
            <person name="Gumienny T.L."/>
            <person name="Brugnera E."/>
            <person name="Tosello-Trampont A.-C."/>
            <person name="Kinchen J.M."/>
            <person name="Haney L.B."/>
            <person name="Nishiwaki K."/>
            <person name="Walk S.F."/>
            <person name="Nemergut M.E."/>
            <person name="Macara I.G."/>
            <person name="Francis R."/>
            <person name="Schedl T."/>
            <person name="Qin Y."/>
            <person name="Van Aelst L."/>
            <person name="Hengartner M.O."/>
            <person name="Ravichandran K.S."/>
        </authorList>
    </citation>
    <scope>FUNCTION</scope>
</reference>
<reference evidence="15" key="6">
    <citation type="journal article" date="2002" name="Dev. Biol.">
        <title>Distinct rac activation pathways control Caenorhabditis elegans cell migration and axon outgrowth.</title>
        <authorList>
            <person name="Wu Y.C."/>
            <person name="Cheng T.W."/>
            <person name="Lee M.C."/>
            <person name="Weng N.Y."/>
        </authorList>
    </citation>
    <scope>FUNCTION</scope>
</reference>
<reference evidence="15" key="7">
    <citation type="journal article" date="2003" name="Science">
        <title>Cell corpse engulfment mediated by C. elegans phosphatidylserine receptor through CED-5 and CED-12.</title>
        <authorList>
            <person name="Wang X."/>
            <person name="Wu Y.-C."/>
            <person name="Fadok V.A."/>
            <person name="Lee M.-C."/>
            <person name="Gengyo-Ando K."/>
            <person name="Cheng L.-C."/>
            <person name="Ledwich D."/>
            <person name="Hsu P.-K."/>
            <person name="Chen J.-Y."/>
            <person name="Chou B.-K."/>
            <person name="Henson P."/>
            <person name="Mitani S."/>
            <person name="Xue D."/>
        </authorList>
    </citation>
    <scope>FUNCTION</scope>
    <scope>INTERACTION WITH PSR-1</scope>
</reference>
<reference evidence="15" key="8">
    <citation type="journal article" date="2004" name="Curr. Biol.">
        <title>Phagocytosis of apoptotic cells is regulated by a UNC-73/TRIO-MIG-2/RhoG signaling module and armadillo repeats of CED-12/ELMO.</title>
        <authorList>
            <person name="deBakker C.D."/>
            <person name="Haney L.B."/>
            <person name="Kinchen J.M."/>
            <person name="Grimsley C."/>
            <person name="Lu M."/>
            <person name="Klingele D."/>
            <person name="Hsu P.K."/>
            <person name="Chou B.K."/>
            <person name="Cheng L.C."/>
            <person name="Blangy A."/>
            <person name="Sondek J."/>
            <person name="Hengartner M.O."/>
            <person name="Wu Y.C."/>
            <person name="Ravichandran K.S."/>
        </authorList>
    </citation>
    <scope>FUNCTION</scope>
    <scope>DISRUPTION PHENOTYPE</scope>
</reference>
<reference evidence="15" key="9">
    <citation type="journal article" date="2004" name="Nat. Struct. Mol. Biol.">
        <title>PH domain of ELMO functions in trans to regulate Rac activation via Dock180.</title>
        <authorList>
            <person name="Lu M."/>
            <person name="Kinchen J.M."/>
            <person name="Rossman K.L."/>
            <person name="Grimsley C."/>
            <person name="deBakker C."/>
            <person name="Brugnera E."/>
            <person name="Tosello-Trampont A.-C."/>
            <person name="Haney L.B."/>
            <person name="Klingele D."/>
            <person name="Sondek J."/>
            <person name="Hengartner M.O."/>
            <person name="Ravichandran K.S."/>
        </authorList>
    </citation>
    <scope>FUNCTION</scope>
    <scope>DISRUPTION PHENOTYPE</scope>
</reference>
<reference evidence="15" key="10">
    <citation type="journal article" date="2005" name="Nature">
        <title>Two pathways converge at CED-10 to mediate actin rearrangement and corpse removal in C. elegans.</title>
        <authorList>
            <person name="Kinchen J.M."/>
            <person name="Cabello J."/>
            <person name="Klingele D."/>
            <person name="Wong K."/>
            <person name="Feichtinger R."/>
            <person name="Schnabel H."/>
            <person name="Schnabel R."/>
            <person name="Hengartner M.O."/>
        </authorList>
    </citation>
    <scope>FUNCTION</scope>
    <scope>DISRUPTION PHENOTYPE</scope>
</reference>
<reference key="11">
    <citation type="journal article" date="2011" name="Development">
        <title>The phosphoinositide phosphatase MTM-1 regulates apoptotic cell corpse clearance through CED-5-CED-12 in C. elegans.</title>
        <authorList>
            <person name="Neukomm L.J."/>
            <person name="Nicot A.S."/>
            <person name="Kinchen J.M."/>
            <person name="Almendinger J."/>
            <person name="Pinto S.M."/>
            <person name="Zeng S."/>
            <person name="Doukoumetzidis K."/>
            <person name="Tronchere H."/>
            <person name="Payrastre B."/>
            <person name="Laporte J.F."/>
            <person name="Hengartner M.O."/>
        </authorList>
    </citation>
    <scope>FUNCTION</scope>
    <scope>DOMAIN</scope>
</reference>
<reference key="12">
    <citation type="journal article" date="2015" name="PLoS Genet.">
        <title>The Wnt frizzled receptor MOM-5 regulates the UNC-5 Netrin receptor through small GTPase-dependent signaling to determine the polarity of migrating cells.</title>
        <authorList>
            <person name="Levy-Strumpf N."/>
            <person name="Krizus M."/>
            <person name="Zheng H."/>
            <person name="Brown L."/>
            <person name="Culotti J.G."/>
        </authorList>
    </citation>
    <scope>FUNCTION</scope>
    <scope>DISRUPTION PHENOTYPE</scope>
</reference>
<gene>
    <name evidence="16" type="primary">ced-12</name>
    <name type="ORF">Y106G6E.5</name>
</gene>
<accession>Q8STE5</accession>
<proteinExistence type="evidence at protein level"/>
<dbReference type="EMBL" id="AF416781">
    <property type="protein sequence ID" value="AAL38510.1"/>
    <property type="molecule type" value="mRNA"/>
</dbReference>
<dbReference type="EMBL" id="AF324505">
    <property type="protein sequence ID" value="AAL49495.1"/>
    <property type="molecule type" value="mRNA"/>
</dbReference>
<dbReference type="EMBL" id="AL032656">
    <property type="protein sequence ID" value="CAD12890.1"/>
    <property type="molecule type" value="Genomic_DNA"/>
</dbReference>
<dbReference type="RefSeq" id="NP_492693.1">
    <property type="nucleotide sequence ID" value="NM_060292.7"/>
</dbReference>
<dbReference type="SMR" id="Q8STE5"/>
<dbReference type="BioGRID" id="38308">
    <property type="interactions" value="5"/>
</dbReference>
<dbReference type="FunCoup" id="Q8STE5">
    <property type="interactions" value="1995"/>
</dbReference>
<dbReference type="IntAct" id="Q8STE5">
    <property type="interactions" value="4"/>
</dbReference>
<dbReference type="MINT" id="Q8STE5"/>
<dbReference type="STRING" id="6239.Y106G6E.5b.1"/>
<dbReference type="PaxDb" id="6239-Y106G6E.5.1"/>
<dbReference type="PeptideAtlas" id="Q8STE5"/>
<dbReference type="EnsemblMetazoa" id="Y106G6E.5a.1">
    <property type="protein sequence ID" value="Y106G6E.5a.1"/>
    <property type="gene ID" value="WBGene00000426"/>
</dbReference>
<dbReference type="GeneID" id="172890"/>
<dbReference type="KEGG" id="cel:CELE_Y106G6E.5"/>
<dbReference type="UCSC" id="Y106G6E.5.1">
    <property type="organism name" value="c. elegans"/>
</dbReference>
<dbReference type="AGR" id="WB:WBGene00000426"/>
<dbReference type="CTD" id="34633"/>
<dbReference type="WormBase" id="Y106G6E.5a">
    <property type="protein sequence ID" value="CE27228"/>
    <property type="gene ID" value="WBGene00000426"/>
    <property type="gene designation" value="ced-12"/>
</dbReference>
<dbReference type="eggNOG" id="KOG2999">
    <property type="taxonomic scope" value="Eukaryota"/>
</dbReference>
<dbReference type="HOGENOM" id="CLU_339579_0_0_1"/>
<dbReference type="InParanoid" id="Q8STE5"/>
<dbReference type="OrthoDB" id="28413at2759"/>
<dbReference type="PhylomeDB" id="Q8STE5"/>
<dbReference type="Reactome" id="R-CEL-8849471">
    <property type="pathway name" value="PTK6 Regulates RHO GTPases, RAS GTPase and MAP kinases"/>
</dbReference>
<dbReference type="Reactome" id="R-CEL-9013408">
    <property type="pathway name" value="RHOG GTPase cycle"/>
</dbReference>
<dbReference type="SignaLink" id="Q8STE5"/>
<dbReference type="PRO" id="PR:Q8STE5"/>
<dbReference type="Proteomes" id="UP000001940">
    <property type="component" value="Chromosome I"/>
</dbReference>
<dbReference type="Bgee" id="WBGene00000426">
    <property type="expression patterns" value="Expressed in germ line (C elegans) and 4 other cell types or tissues"/>
</dbReference>
<dbReference type="ExpressionAtlas" id="Q8STE5">
    <property type="expression patterns" value="baseline and differential"/>
</dbReference>
<dbReference type="GO" id="GO:0005737">
    <property type="term" value="C:cytoplasm"/>
    <property type="evidence" value="ECO:0000314"/>
    <property type="project" value="UniProtKB"/>
</dbReference>
<dbReference type="GO" id="GO:0032045">
    <property type="term" value="C:guanyl-nucleotide exchange factor complex"/>
    <property type="evidence" value="ECO:0000314"/>
    <property type="project" value="WormBase"/>
</dbReference>
<dbReference type="GO" id="GO:0005886">
    <property type="term" value="C:plasma membrane"/>
    <property type="evidence" value="ECO:0000314"/>
    <property type="project" value="WormBase"/>
</dbReference>
<dbReference type="GO" id="GO:0019899">
    <property type="term" value="F:enzyme binding"/>
    <property type="evidence" value="ECO:0000353"/>
    <property type="project" value="UniProtKB"/>
</dbReference>
<dbReference type="GO" id="GO:0005547">
    <property type="term" value="F:phosphatidylinositol-3,4,5-trisphosphate binding"/>
    <property type="evidence" value="ECO:0000314"/>
    <property type="project" value="WormBase"/>
</dbReference>
<dbReference type="GO" id="GO:0080025">
    <property type="term" value="F:phosphatidylinositol-3,5-bisphosphate binding"/>
    <property type="evidence" value="ECO:0000314"/>
    <property type="project" value="WormBase"/>
</dbReference>
<dbReference type="GO" id="GO:0070273">
    <property type="term" value="F:phosphatidylinositol-4-phosphate binding"/>
    <property type="evidence" value="ECO:0000314"/>
    <property type="project" value="WormBase"/>
</dbReference>
<dbReference type="GO" id="GO:0070064">
    <property type="term" value="F:proline-rich region binding"/>
    <property type="evidence" value="ECO:0000353"/>
    <property type="project" value="UniProtKB"/>
</dbReference>
<dbReference type="GO" id="GO:0044877">
    <property type="term" value="F:protein-containing complex binding"/>
    <property type="evidence" value="ECO:0000353"/>
    <property type="project" value="UniProtKB"/>
</dbReference>
<dbReference type="GO" id="GO:0017124">
    <property type="term" value="F:SH3 domain binding"/>
    <property type="evidence" value="ECO:0000304"/>
    <property type="project" value="WormBase"/>
</dbReference>
<dbReference type="GO" id="GO:0031267">
    <property type="term" value="F:small GTPase binding"/>
    <property type="evidence" value="ECO:0000353"/>
    <property type="project" value="WormBase"/>
</dbReference>
<dbReference type="GO" id="GO:0030036">
    <property type="term" value="P:actin cytoskeleton organization"/>
    <property type="evidence" value="ECO:0000315"/>
    <property type="project" value="UniProtKB"/>
</dbReference>
<dbReference type="GO" id="GO:0007015">
    <property type="term" value="P:actin filament organization"/>
    <property type="evidence" value="ECO:0000314"/>
    <property type="project" value="WormBase"/>
</dbReference>
<dbReference type="GO" id="GO:1902742">
    <property type="term" value="P:apoptotic process involved in development"/>
    <property type="evidence" value="ECO:0000315"/>
    <property type="project" value="UniProtKB"/>
</dbReference>
<dbReference type="GO" id="GO:0016477">
    <property type="term" value="P:cell migration"/>
    <property type="evidence" value="ECO:0000315"/>
    <property type="project" value="UniProtKB"/>
</dbReference>
<dbReference type="GO" id="GO:0048870">
    <property type="term" value="P:cell motility"/>
    <property type="evidence" value="ECO:0000318"/>
    <property type="project" value="GO_Central"/>
</dbReference>
<dbReference type="GO" id="GO:0060097">
    <property type="term" value="P:cytoskeletal rearrangement involved in phagocytosis, engulfment"/>
    <property type="evidence" value="ECO:0000315"/>
    <property type="project" value="UniProtKB"/>
</dbReference>
<dbReference type="GO" id="GO:0043652">
    <property type="term" value="P:engulfment of apoptotic cell"/>
    <property type="evidence" value="ECO:0000315"/>
    <property type="project" value="UniProtKB"/>
</dbReference>
<dbReference type="GO" id="GO:0000132">
    <property type="term" value="P:establishment of mitotic spindle orientation"/>
    <property type="evidence" value="ECO:0000316"/>
    <property type="project" value="UniProtKB"/>
</dbReference>
<dbReference type="GO" id="GO:0035262">
    <property type="term" value="P:gonad morphogenesis"/>
    <property type="evidence" value="ECO:0000315"/>
    <property type="project" value="UniProtKB"/>
</dbReference>
<dbReference type="GO" id="GO:0070986">
    <property type="term" value="P:left/right axis specification"/>
    <property type="evidence" value="ECO:0000316"/>
    <property type="project" value="UniProtKB"/>
</dbReference>
<dbReference type="GO" id="GO:0006911">
    <property type="term" value="P:phagocytosis, engulfment"/>
    <property type="evidence" value="ECO:0000315"/>
    <property type="project" value="UniProtKB"/>
</dbReference>
<dbReference type="GO" id="GO:1903356">
    <property type="term" value="P:positive regulation of distal tip cell migration"/>
    <property type="evidence" value="ECO:0000316"/>
    <property type="project" value="UniProtKB"/>
</dbReference>
<dbReference type="GO" id="GO:1901076">
    <property type="term" value="P:positive regulation of engulfment of apoptotic cell"/>
    <property type="evidence" value="ECO:0000316"/>
    <property type="project" value="UniProtKB"/>
</dbReference>
<dbReference type="GO" id="GO:0030334">
    <property type="term" value="P:regulation of cell migration"/>
    <property type="evidence" value="ECO:0000315"/>
    <property type="project" value="WormBase"/>
</dbReference>
<dbReference type="FunFam" id="1.25.10.10:FF:001432">
    <property type="entry name" value="Cell death abnormality protein 12"/>
    <property type="match status" value="1"/>
</dbReference>
<dbReference type="Gene3D" id="6.10.10.90">
    <property type="match status" value="1"/>
</dbReference>
<dbReference type="Gene3D" id="1.25.10.10">
    <property type="entry name" value="Leucine-rich Repeat Variant"/>
    <property type="match status" value="1"/>
</dbReference>
<dbReference type="InterPro" id="IPR011989">
    <property type="entry name" value="ARM-like"/>
</dbReference>
<dbReference type="InterPro" id="IPR016024">
    <property type="entry name" value="ARM-type_fold"/>
</dbReference>
<dbReference type="InterPro" id="IPR024574">
    <property type="entry name" value="ELMO_ARM"/>
</dbReference>
<dbReference type="InterPro" id="IPR006816">
    <property type="entry name" value="ELMO_dom"/>
</dbReference>
<dbReference type="InterPro" id="IPR001849">
    <property type="entry name" value="PH_domain"/>
</dbReference>
<dbReference type="Pfam" id="PF11841">
    <property type="entry name" value="ELMO_ARM"/>
    <property type="match status" value="1"/>
</dbReference>
<dbReference type="Pfam" id="PF04727">
    <property type="entry name" value="ELMO_CED12"/>
    <property type="match status" value="1"/>
</dbReference>
<dbReference type="Pfam" id="PF16457">
    <property type="entry name" value="PH_12"/>
    <property type="match status" value="1"/>
</dbReference>
<dbReference type="SUPFAM" id="SSF48371">
    <property type="entry name" value="ARM repeat"/>
    <property type="match status" value="1"/>
</dbReference>
<dbReference type="PROSITE" id="PS51335">
    <property type="entry name" value="ELMO"/>
    <property type="match status" value="1"/>
</dbReference>
<feature type="chain" id="PRO_0000379436" description="Cell death abnormality protein 12">
    <location>
        <begin position="1"/>
        <end position="731"/>
    </location>
</feature>
<feature type="domain" description="ELMO" evidence="2">
    <location>
        <begin position="339"/>
        <end position="485"/>
    </location>
</feature>
<feature type="domain" description="PH" evidence="1">
    <location>
        <begin position="544"/>
        <end position="679"/>
    </location>
</feature>
<feature type="short sequence motif" description="SH3-binding" evidence="1">
    <location>
        <begin position="715"/>
        <end position="718"/>
    </location>
</feature>